<comment type="function">
    <text evidence="3 6">Alpha subunit of the heteropentameric ligand-gated chloride channel gated by gamma-aminobutyric acid (GABA), a major inhibitory neurotransmitter in the brain (PubMed:17005728). GABA-gated chloride channels, also named GABA(A) receptors (GABAAR), consist of five subunits arranged around a central pore and contain GABA active binding site(s) located at the alpha and beta subunit interface(s) (By similarity). Alpha-4/GABRA4 subunit often assembles with delta or gamma-2 subunits, in combination with beta subunits (By similarity). When activated by GABA, GABAARs selectively allow the flow of chloride anions across the cell membrane down their electrochemical gradient (PubMed:17005728). GABAARs containing alpha-4 are predominantly extrasynaptic, contributing to tonic inhibition in dentate granule cells and thalamic relay neurons (PubMed:17005728). Extrasynaptic alpha-4-containing GABAARs control levels of excitability and network activity (PubMed:17005728). GABAAR containing alpha-4-beta-3-delta subunits can simultaneously bind GABA and histamine where histamine binds at the interface of two neighboring beta subunits, which may be involved in the regulation of sleep and wakefulness (By similarity).</text>
</comment>
<comment type="catalytic activity">
    <reaction evidence="6">
        <text>chloride(in) = chloride(out)</text>
        <dbReference type="Rhea" id="RHEA:29823"/>
        <dbReference type="ChEBI" id="CHEBI:17996"/>
    </reaction>
</comment>
<comment type="activity regulation">
    <text evidence="3 6">Potentiated by gaboxadol (PubMed:17005728). Potentiated by histamine (By similarity).</text>
</comment>
<comment type="subunit">
    <text evidence="3">Heteropentamer, formed by a combination of alpha (GABRA1-6), beta (GABRB1-3), gamma (GABRG1-3), delta (GABRD), epsilon (GABRE), rho (GABRR1-3), pi (GABRP) and theta (GABRQ) chains, each subunit exhibiting distinct physiological and pharmacological properties.</text>
</comment>
<comment type="subcellular location">
    <subcellularLocation>
        <location evidence="6">Cell membrane</location>
        <topology evidence="3">Multi-pass membrane protein</topology>
    </subcellularLocation>
    <subcellularLocation>
        <location>Postsynaptic cell membrane</location>
        <topology evidence="3">Multi-pass membrane protein</topology>
    </subcellularLocation>
</comment>
<comment type="tissue specificity">
    <text evidence="6">Expressed in the brain.</text>
</comment>
<comment type="domain">
    <text evidence="3">The GABA-binding pockets are located at the interface between neighboring alpha and beta subunits.</text>
</comment>
<comment type="domain">
    <text evidence="1">GABAARs subunits share a common topological structure: a peptide sequence made up of a long extracellular N-terminal, four transmembrane domains, intracellular or cytoplasmic domain located between the third and the fourth transmembrane domains.</text>
</comment>
<comment type="disruption phenotype">
    <text evidence="6">Knockout mice are viable, breed normally and are superficially indistinguishable from WT mice. In electrophysiological recordings, knockout mice show a lack of tonic inhibition in dentate granule cells and thalamic relay neurons. Behaviorally, knockout mice are insensitive to the ataxic, sedative, and analgesic effects of the hypnotic drug, gaboxadol.</text>
</comment>
<comment type="similarity">
    <text evidence="8">Belongs to the ligand-gated ion channel (TC 1.A.9) family. Gamma-aminobutyric acid receptor (TC 1.A.9.5) subfamily. GABRA4 sub-subfamily.</text>
</comment>
<name>GBRA4_MOUSE</name>
<sequence>MVSVQKVPAIALCSGVSLALLHFLCLAACLNESPGQNSKDEKLCPENFTRILDSLLDGYDNRLRPGFGGPVTEVKTDIYVTSFGPVSDVEMEYTMDVFFRQTWIDKRLKYDGPIEILRLNNMMVTKVWTPDTFFRNGKKSVSHNMTAPNKLFRIMRNGTILYTMRLTISAECPMRLVDFPMDGHACPLKFGSYAYPKSEMIYTWTKGPEKSVEVPKESSSLVQYDLIGQTVSSETIKSITGEYIVMTVYFHLRRKMGYFMIQTYIPCIMTVILSQVSFWINKESVPARTVFGITTVLTMTTLSISARHSLPKVSYATAMDWFIAVCFAFVFSALIEFAAVNYFTNIQMQKAKKKISKPPPEVPAAPVLKEKHTETSLQNTHANLNMRKRTNALVHSESDVKSRTEVGNHSSKTSAVQESSEATPKAHLASSPNPFSRANAAETMSAAARGLSSAASPSPHGTLRPASLGSASTRPAFGSRLGRIKTTVNTTGAAGNVSATPPPPAPPPSGSGTSKIDKYARILFPVTFGAFNMVYWVVYLSKDTMEKSESLM</sequence>
<keyword id="KW-1003">Cell membrane</keyword>
<keyword id="KW-0868">Chloride</keyword>
<keyword id="KW-0869">Chloride channel</keyword>
<keyword id="KW-1015">Disulfide bond</keyword>
<keyword id="KW-0325">Glycoprotein</keyword>
<keyword id="KW-0407">Ion channel</keyword>
<keyword id="KW-0406">Ion transport</keyword>
<keyword id="KW-1071">Ligand-gated ion channel</keyword>
<keyword id="KW-0472">Membrane</keyword>
<keyword id="KW-0628">Postsynaptic cell membrane</keyword>
<keyword id="KW-0675">Receptor</keyword>
<keyword id="KW-1185">Reference proteome</keyword>
<keyword id="KW-0732">Signal</keyword>
<keyword id="KW-0770">Synapse</keyword>
<keyword id="KW-0812">Transmembrane</keyword>
<keyword id="KW-1133">Transmembrane helix</keyword>
<keyword id="KW-0813">Transport</keyword>
<protein>
    <recommendedName>
        <fullName evidence="3">Gamma-aminobutyric acid receptor subunit alpha-4</fullName>
    </recommendedName>
    <alternativeName>
        <fullName evidence="7">GABA(A) receptor subunit alpha-4</fullName>
        <shortName evidence="7">GABAAR subunit alpha-4</shortName>
    </alternativeName>
</protein>
<proteinExistence type="evidence at transcript level"/>
<organism>
    <name type="scientific">Mus musculus</name>
    <name type="common">Mouse</name>
    <dbReference type="NCBI Taxonomy" id="10090"/>
    <lineage>
        <taxon>Eukaryota</taxon>
        <taxon>Metazoa</taxon>
        <taxon>Chordata</taxon>
        <taxon>Craniata</taxon>
        <taxon>Vertebrata</taxon>
        <taxon>Euteleostomi</taxon>
        <taxon>Mammalia</taxon>
        <taxon>Eutheria</taxon>
        <taxon>Euarchontoglires</taxon>
        <taxon>Glires</taxon>
        <taxon>Rodentia</taxon>
        <taxon>Myomorpha</taxon>
        <taxon>Muroidea</taxon>
        <taxon>Muridae</taxon>
        <taxon>Murinae</taxon>
        <taxon>Mus</taxon>
        <taxon>Mus</taxon>
    </lineage>
</organism>
<feature type="signal peptide" evidence="4">
    <location>
        <begin position="1"/>
        <end position="35"/>
    </location>
</feature>
<feature type="chain" id="PRO_0000000442" description="Gamma-aminobutyric acid receptor subunit alpha-4">
    <location>
        <begin position="36"/>
        <end position="552"/>
    </location>
</feature>
<feature type="topological domain" description="Extracellular" evidence="8">
    <location>
        <begin position="36"/>
        <end position="259"/>
    </location>
</feature>
<feature type="transmembrane region" description="Helical" evidence="3">
    <location>
        <begin position="260"/>
        <end position="280"/>
    </location>
</feature>
<feature type="topological domain" description="Cytoplasmic" evidence="8">
    <location>
        <begin position="281"/>
        <end position="284"/>
    </location>
</feature>
<feature type="transmembrane region" description="Helical" evidence="3">
    <location>
        <begin position="285"/>
        <end position="305"/>
    </location>
</feature>
<feature type="topological domain" description="Extracellular" evidence="8">
    <location>
        <begin position="306"/>
        <end position="318"/>
    </location>
</feature>
<feature type="transmembrane region" description="Helical" evidence="3">
    <location>
        <begin position="319"/>
        <end position="341"/>
    </location>
</feature>
<feature type="topological domain" description="Cytoplasmic" evidence="8">
    <location>
        <begin position="342"/>
        <end position="515"/>
    </location>
</feature>
<feature type="transmembrane region" description="Helical" evidence="3">
    <location>
        <begin position="516"/>
        <end position="538"/>
    </location>
</feature>
<feature type="topological domain" description="Extracellular" evidence="8">
    <location>
        <begin position="539"/>
        <end position="552"/>
    </location>
</feature>
<feature type="region of interest" description="Disordered" evidence="5">
    <location>
        <begin position="353"/>
        <end position="480"/>
    </location>
</feature>
<feature type="region of interest" description="Disordered" evidence="5">
    <location>
        <begin position="492"/>
        <end position="513"/>
    </location>
</feature>
<feature type="compositionally biased region" description="Basic and acidic residues" evidence="5">
    <location>
        <begin position="396"/>
        <end position="406"/>
    </location>
</feature>
<feature type="compositionally biased region" description="Polar residues" evidence="5">
    <location>
        <begin position="407"/>
        <end position="422"/>
    </location>
</feature>
<feature type="compositionally biased region" description="Low complexity" evidence="5">
    <location>
        <begin position="445"/>
        <end position="458"/>
    </location>
</feature>
<feature type="compositionally biased region" description="Pro residues" evidence="5">
    <location>
        <begin position="500"/>
        <end position="509"/>
    </location>
</feature>
<feature type="binding site" evidence="3">
    <location>
        <position position="100"/>
    </location>
    <ligand>
        <name>4-aminobutanoate</name>
        <dbReference type="ChEBI" id="CHEBI:59888"/>
        <note>ligand shared with the neighboring beta subunit</note>
    </ligand>
</feature>
<feature type="binding site" evidence="3">
    <location>
        <position position="163"/>
    </location>
    <ligand>
        <name>4-aminobutanoate</name>
        <dbReference type="ChEBI" id="CHEBI:59888"/>
        <note>ligand shared with the neighboring beta subunit</note>
    </ligand>
</feature>
<feature type="glycosylation site" description="N-linked (GlcNAc...) asparagine" evidence="4">
    <location>
        <position position="47"/>
    </location>
</feature>
<feature type="glycosylation site" description="N-linked (GlcNAc...) asparagine" evidence="4">
    <location>
        <position position="144"/>
    </location>
</feature>
<feature type="glycosylation site" description="N-linked (GlcNAc...) asparagine" evidence="4">
    <location>
        <position position="157"/>
    </location>
</feature>
<feature type="disulfide bond" evidence="2">
    <location>
        <begin position="172"/>
        <end position="186"/>
    </location>
</feature>
<gene>
    <name evidence="9" type="primary">Gabra4</name>
</gene>
<dbReference type="EMBL" id="AK013727">
    <property type="protein sequence ID" value="BAB28975.1"/>
    <property type="molecule type" value="mRNA"/>
</dbReference>
<dbReference type="CCDS" id="CCDS39107.1"/>
<dbReference type="RefSeq" id="NP_034381.1">
    <property type="nucleotide sequence ID" value="NM_010251.2"/>
</dbReference>
<dbReference type="SMR" id="Q9D6F4"/>
<dbReference type="BioGRID" id="199800">
    <property type="interactions" value="2"/>
</dbReference>
<dbReference type="ComplexPortal" id="CPX-2988">
    <property type="entry name" value="GABA-A receptor, alpha4-beta2-delta"/>
</dbReference>
<dbReference type="ComplexPortal" id="CPX-2989">
    <property type="entry name" value="GABA-A receptor, alpha4-beta3-delta"/>
</dbReference>
<dbReference type="FunCoup" id="Q9D6F4">
    <property type="interactions" value="494"/>
</dbReference>
<dbReference type="STRING" id="10090.ENSMUSP00000031121"/>
<dbReference type="ChEMBL" id="CHEMBL2094133"/>
<dbReference type="DrugCentral" id="Q9D6F4"/>
<dbReference type="GlyConnect" id="2323">
    <property type="glycosylation" value="6 N-Linked glycans (2 sites)"/>
</dbReference>
<dbReference type="GlyCosmos" id="Q9D6F4">
    <property type="glycosylation" value="3 sites, 6 glycans"/>
</dbReference>
<dbReference type="GlyGen" id="Q9D6F4">
    <property type="glycosylation" value="4 sites, 9 N-linked glycans (3 sites), 1 O-linked glycan (1 site)"/>
</dbReference>
<dbReference type="iPTMnet" id="Q9D6F4"/>
<dbReference type="PhosphoSitePlus" id="Q9D6F4"/>
<dbReference type="PaxDb" id="10090-ENSMUSP00000031121"/>
<dbReference type="ProteomicsDB" id="273420"/>
<dbReference type="ABCD" id="Q9D6F4">
    <property type="antibodies" value="1 sequenced antibody"/>
</dbReference>
<dbReference type="Antibodypedia" id="12041">
    <property type="antibodies" value="420 antibodies from 38 providers"/>
</dbReference>
<dbReference type="DNASU" id="14397"/>
<dbReference type="Ensembl" id="ENSMUST00000031121.10">
    <property type="protein sequence ID" value="ENSMUSP00000031121.6"/>
    <property type="gene ID" value="ENSMUSG00000029211.12"/>
</dbReference>
<dbReference type="GeneID" id="14397"/>
<dbReference type="KEGG" id="mmu:14397"/>
<dbReference type="UCSC" id="uc008xqy.1">
    <property type="organism name" value="mouse"/>
</dbReference>
<dbReference type="AGR" id="MGI:95616"/>
<dbReference type="CTD" id="2557"/>
<dbReference type="MGI" id="MGI:95616">
    <property type="gene designation" value="Gabra4"/>
</dbReference>
<dbReference type="VEuPathDB" id="HostDB:ENSMUSG00000029211"/>
<dbReference type="eggNOG" id="KOG3642">
    <property type="taxonomic scope" value="Eukaryota"/>
</dbReference>
<dbReference type="GeneTree" id="ENSGT00940000159024"/>
<dbReference type="HOGENOM" id="CLU_010920_1_6_1"/>
<dbReference type="InParanoid" id="Q9D6F4"/>
<dbReference type="OMA" id="FFCLTTC"/>
<dbReference type="PhylomeDB" id="Q9D6F4"/>
<dbReference type="TreeFam" id="TF315453"/>
<dbReference type="Reactome" id="R-MMU-977443">
    <property type="pathway name" value="GABA receptor activation"/>
</dbReference>
<dbReference type="BioGRID-ORCS" id="14397">
    <property type="hits" value="3 hits in 77 CRISPR screens"/>
</dbReference>
<dbReference type="CD-CODE" id="CE726F99">
    <property type="entry name" value="Postsynaptic density"/>
</dbReference>
<dbReference type="PRO" id="PR:Q9D6F4"/>
<dbReference type="Proteomes" id="UP000000589">
    <property type="component" value="Chromosome 5"/>
</dbReference>
<dbReference type="RNAct" id="Q9D6F4">
    <property type="molecule type" value="protein"/>
</dbReference>
<dbReference type="Bgee" id="ENSMUSG00000029211">
    <property type="expression patterns" value="Expressed in lateral geniculate body and 146 other cell types or tissues"/>
</dbReference>
<dbReference type="ExpressionAtlas" id="Q9D6F4">
    <property type="expression patterns" value="baseline and differential"/>
</dbReference>
<dbReference type="GO" id="GO:0034707">
    <property type="term" value="C:chloride channel complex"/>
    <property type="evidence" value="ECO:0007669"/>
    <property type="project" value="UniProtKB-KW"/>
</dbReference>
<dbReference type="GO" id="GO:1902711">
    <property type="term" value="C:GABA-A receptor complex"/>
    <property type="evidence" value="ECO:0000266"/>
    <property type="project" value="ComplexPortal"/>
</dbReference>
<dbReference type="GO" id="GO:0098982">
    <property type="term" value="C:GABA-ergic synapse"/>
    <property type="evidence" value="ECO:0007669"/>
    <property type="project" value="Ensembl"/>
</dbReference>
<dbReference type="GO" id="GO:0099634">
    <property type="term" value="C:postsynaptic specialization membrane"/>
    <property type="evidence" value="ECO:0007669"/>
    <property type="project" value="Ensembl"/>
</dbReference>
<dbReference type="GO" id="GO:0005254">
    <property type="term" value="F:chloride channel activity"/>
    <property type="evidence" value="ECO:0007669"/>
    <property type="project" value="UniProtKB-KW"/>
</dbReference>
<dbReference type="GO" id="GO:0004890">
    <property type="term" value="F:GABA-A receptor activity"/>
    <property type="evidence" value="ECO:0007669"/>
    <property type="project" value="InterPro"/>
</dbReference>
<dbReference type="GO" id="GO:1904315">
    <property type="term" value="F:transmitter-gated monoatomic ion channel activity involved in regulation of postsynaptic membrane potential"/>
    <property type="evidence" value="ECO:0007669"/>
    <property type="project" value="Ensembl"/>
</dbReference>
<dbReference type="GO" id="GO:0007417">
    <property type="term" value="P:central nervous system development"/>
    <property type="evidence" value="ECO:0000315"/>
    <property type="project" value="MGI"/>
</dbReference>
<dbReference type="GO" id="GO:0007214">
    <property type="term" value="P:gamma-aminobutyric acid signaling pathway"/>
    <property type="evidence" value="ECO:0000266"/>
    <property type="project" value="ComplexPortal"/>
</dbReference>
<dbReference type="GO" id="GO:0051932">
    <property type="term" value="P:synaptic transmission, GABAergic"/>
    <property type="evidence" value="ECO:0000303"/>
    <property type="project" value="ComplexPortal"/>
</dbReference>
<dbReference type="CDD" id="cd19037">
    <property type="entry name" value="LGIC_ECD_GABAAR_A4"/>
    <property type="match status" value="1"/>
</dbReference>
<dbReference type="CDD" id="cd19052">
    <property type="entry name" value="LGIC_TM_GABAAR_alpha"/>
    <property type="match status" value="1"/>
</dbReference>
<dbReference type="FunFam" id="2.70.170.10:FF:000001">
    <property type="entry name" value="Gamma-aminobutyric acid A receptor subunit alpha-2"/>
    <property type="match status" value="1"/>
</dbReference>
<dbReference type="FunFam" id="1.20.58.390:FF:000002">
    <property type="entry name" value="Putative gamma-aminobutyric acid receptor subunit alpha-5"/>
    <property type="match status" value="1"/>
</dbReference>
<dbReference type="Gene3D" id="2.70.170.10">
    <property type="entry name" value="Neurotransmitter-gated ion-channel ligand-binding domain"/>
    <property type="match status" value="1"/>
</dbReference>
<dbReference type="Gene3D" id="1.20.58.390">
    <property type="entry name" value="Neurotransmitter-gated ion-channel transmembrane domain"/>
    <property type="match status" value="1"/>
</dbReference>
<dbReference type="InterPro" id="IPR006028">
    <property type="entry name" value="GABAA/Glycine_rcpt"/>
</dbReference>
<dbReference type="InterPro" id="IPR001390">
    <property type="entry name" value="GABAAa_rcpt"/>
</dbReference>
<dbReference type="InterPro" id="IPR005434">
    <property type="entry name" value="GABBAa4_rcpt"/>
</dbReference>
<dbReference type="InterPro" id="IPR047024">
    <property type="entry name" value="Gabra-1-6_TM"/>
</dbReference>
<dbReference type="InterPro" id="IPR006202">
    <property type="entry name" value="Neur_chan_lig-bd"/>
</dbReference>
<dbReference type="InterPro" id="IPR036734">
    <property type="entry name" value="Neur_chan_lig-bd_sf"/>
</dbReference>
<dbReference type="InterPro" id="IPR006201">
    <property type="entry name" value="Neur_channel"/>
</dbReference>
<dbReference type="InterPro" id="IPR036719">
    <property type="entry name" value="Neuro-gated_channel_TM_sf"/>
</dbReference>
<dbReference type="InterPro" id="IPR038050">
    <property type="entry name" value="Neuro_actylchol_rec"/>
</dbReference>
<dbReference type="InterPro" id="IPR006029">
    <property type="entry name" value="Neurotrans-gated_channel_TM"/>
</dbReference>
<dbReference type="InterPro" id="IPR018000">
    <property type="entry name" value="Neurotransmitter_ion_chnl_CS"/>
</dbReference>
<dbReference type="NCBIfam" id="TIGR00860">
    <property type="entry name" value="LIC"/>
    <property type="match status" value="1"/>
</dbReference>
<dbReference type="PANTHER" id="PTHR18945">
    <property type="entry name" value="NEUROTRANSMITTER GATED ION CHANNEL"/>
    <property type="match status" value="1"/>
</dbReference>
<dbReference type="Pfam" id="PF02931">
    <property type="entry name" value="Neur_chan_LBD"/>
    <property type="match status" value="1"/>
</dbReference>
<dbReference type="Pfam" id="PF02932">
    <property type="entry name" value="Neur_chan_memb"/>
    <property type="match status" value="1"/>
</dbReference>
<dbReference type="PRINTS" id="PR01079">
    <property type="entry name" value="GABAARALPHA"/>
</dbReference>
<dbReference type="PRINTS" id="PR01617">
    <property type="entry name" value="GABAARALPHA4"/>
</dbReference>
<dbReference type="PRINTS" id="PR00253">
    <property type="entry name" value="GABAARECEPTR"/>
</dbReference>
<dbReference type="PRINTS" id="PR00252">
    <property type="entry name" value="NRIONCHANNEL"/>
</dbReference>
<dbReference type="SUPFAM" id="SSF90112">
    <property type="entry name" value="Neurotransmitter-gated ion-channel transmembrane pore"/>
    <property type="match status" value="1"/>
</dbReference>
<dbReference type="SUPFAM" id="SSF63712">
    <property type="entry name" value="Nicotinic receptor ligand binding domain-like"/>
    <property type="match status" value="1"/>
</dbReference>
<dbReference type="PROSITE" id="PS00236">
    <property type="entry name" value="NEUROTR_ION_CHANNEL"/>
    <property type="match status" value="1"/>
</dbReference>
<evidence type="ECO:0000250" key="1">
    <source>
        <dbReference type="UniProtKB" id="P14867"/>
    </source>
</evidence>
<evidence type="ECO:0000250" key="2">
    <source>
        <dbReference type="UniProtKB" id="P28472"/>
    </source>
</evidence>
<evidence type="ECO:0000250" key="3">
    <source>
        <dbReference type="UniProtKB" id="P48169"/>
    </source>
</evidence>
<evidence type="ECO:0000255" key="4"/>
<evidence type="ECO:0000256" key="5">
    <source>
        <dbReference type="SAM" id="MobiDB-lite"/>
    </source>
</evidence>
<evidence type="ECO:0000269" key="6">
    <source>
    </source>
</evidence>
<evidence type="ECO:0000303" key="7">
    <source>
    </source>
</evidence>
<evidence type="ECO:0000305" key="8"/>
<evidence type="ECO:0000312" key="9">
    <source>
        <dbReference type="MGI" id="MGI:95616"/>
    </source>
</evidence>
<accession>Q9D6F4</accession>
<reference key="1">
    <citation type="journal article" date="2005" name="Science">
        <title>The transcriptional landscape of the mammalian genome.</title>
        <authorList>
            <person name="Carninci P."/>
            <person name="Kasukawa T."/>
            <person name="Katayama S."/>
            <person name="Gough J."/>
            <person name="Frith M.C."/>
            <person name="Maeda N."/>
            <person name="Oyama R."/>
            <person name="Ravasi T."/>
            <person name="Lenhard B."/>
            <person name="Wells C."/>
            <person name="Kodzius R."/>
            <person name="Shimokawa K."/>
            <person name="Bajic V.B."/>
            <person name="Brenner S.E."/>
            <person name="Batalov S."/>
            <person name="Forrest A.R."/>
            <person name="Zavolan M."/>
            <person name="Davis M.J."/>
            <person name="Wilming L.G."/>
            <person name="Aidinis V."/>
            <person name="Allen J.E."/>
            <person name="Ambesi-Impiombato A."/>
            <person name="Apweiler R."/>
            <person name="Aturaliya R.N."/>
            <person name="Bailey T.L."/>
            <person name="Bansal M."/>
            <person name="Baxter L."/>
            <person name="Beisel K.W."/>
            <person name="Bersano T."/>
            <person name="Bono H."/>
            <person name="Chalk A.M."/>
            <person name="Chiu K.P."/>
            <person name="Choudhary V."/>
            <person name="Christoffels A."/>
            <person name="Clutterbuck D.R."/>
            <person name="Crowe M.L."/>
            <person name="Dalla E."/>
            <person name="Dalrymple B.P."/>
            <person name="de Bono B."/>
            <person name="Della Gatta G."/>
            <person name="di Bernardo D."/>
            <person name="Down T."/>
            <person name="Engstrom P."/>
            <person name="Fagiolini M."/>
            <person name="Faulkner G."/>
            <person name="Fletcher C.F."/>
            <person name="Fukushima T."/>
            <person name="Furuno M."/>
            <person name="Futaki S."/>
            <person name="Gariboldi M."/>
            <person name="Georgii-Hemming P."/>
            <person name="Gingeras T.R."/>
            <person name="Gojobori T."/>
            <person name="Green R.E."/>
            <person name="Gustincich S."/>
            <person name="Harbers M."/>
            <person name="Hayashi Y."/>
            <person name="Hensch T.K."/>
            <person name="Hirokawa N."/>
            <person name="Hill D."/>
            <person name="Huminiecki L."/>
            <person name="Iacono M."/>
            <person name="Ikeo K."/>
            <person name="Iwama A."/>
            <person name="Ishikawa T."/>
            <person name="Jakt M."/>
            <person name="Kanapin A."/>
            <person name="Katoh M."/>
            <person name="Kawasawa Y."/>
            <person name="Kelso J."/>
            <person name="Kitamura H."/>
            <person name="Kitano H."/>
            <person name="Kollias G."/>
            <person name="Krishnan S.P."/>
            <person name="Kruger A."/>
            <person name="Kummerfeld S.K."/>
            <person name="Kurochkin I.V."/>
            <person name="Lareau L.F."/>
            <person name="Lazarevic D."/>
            <person name="Lipovich L."/>
            <person name="Liu J."/>
            <person name="Liuni S."/>
            <person name="McWilliam S."/>
            <person name="Madan Babu M."/>
            <person name="Madera M."/>
            <person name="Marchionni L."/>
            <person name="Matsuda H."/>
            <person name="Matsuzawa S."/>
            <person name="Miki H."/>
            <person name="Mignone F."/>
            <person name="Miyake S."/>
            <person name="Morris K."/>
            <person name="Mottagui-Tabar S."/>
            <person name="Mulder N."/>
            <person name="Nakano N."/>
            <person name="Nakauchi H."/>
            <person name="Ng P."/>
            <person name="Nilsson R."/>
            <person name="Nishiguchi S."/>
            <person name="Nishikawa S."/>
            <person name="Nori F."/>
            <person name="Ohara O."/>
            <person name="Okazaki Y."/>
            <person name="Orlando V."/>
            <person name="Pang K.C."/>
            <person name="Pavan W.J."/>
            <person name="Pavesi G."/>
            <person name="Pesole G."/>
            <person name="Petrovsky N."/>
            <person name="Piazza S."/>
            <person name="Reed J."/>
            <person name="Reid J.F."/>
            <person name="Ring B.Z."/>
            <person name="Ringwald M."/>
            <person name="Rost B."/>
            <person name="Ruan Y."/>
            <person name="Salzberg S.L."/>
            <person name="Sandelin A."/>
            <person name="Schneider C."/>
            <person name="Schoenbach C."/>
            <person name="Sekiguchi K."/>
            <person name="Semple C.A."/>
            <person name="Seno S."/>
            <person name="Sessa L."/>
            <person name="Sheng Y."/>
            <person name="Shibata Y."/>
            <person name="Shimada H."/>
            <person name="Shimada K."/>
            <person name="Silva D."/>
            <person name="Sinclair B."/>
            <person name="Sperling S."/>
            <person name="Stupka E."/>
            <person name="Sugiura K."/>
            <person name="Sultana R."/>
            <person name="Takenaka Y."/>
            <person name="Taki K."/>
            <person name="Tammoja K."/>
            <person name="Tan S.L."/>
            <person name="Tang S."/>
            <person name="Taylor M.S."/>
            <person name="Tegner J."/>
            <person name="Teichmann S.A."/>
            <person name="Ueda H.R."/>
            <person name="van Nimwegen E."/>
            <person name="Verardo R."/>
            <person name="Wei C.L."/>
            <person name="Yagi K."/>
            <person name="Yamanishi H."/>
            <person name="Zabarovsky E."/>
            <person name="Zhu S."/>
            <person name="Zimmer A."/>
            <person name="Hide W."/>
            <person name="Bult C."/>
            <person name="Grimmond S.M."/>
            <person name="Teasdale R.D."/>
            <person name="Liu E.T."/>
            <person name="Brusic V."/>
            <person name="Quackenbush J."/>
            <person name="Wahlestedt C."/>
            <person name="Mattick J.S."/>
            <person name="Hume D.A."/>
            <person name="Kai C."/>
            <person name="Sasaki D."/>
            <person name="Tomaru Y."/>
            <person name="Fukuda S."/>
            <person name="Kanamori-Katayama M."/>
            <person name="Suzuki M."/>
            <person name="Aoki J."/>
            <person name="Arakawa T."/>
            <person name="Iida J."/>
            <person name="Imamura K."/>
            <person name="Itoh M."/>
            <person name="Kato T."/>
            <person name="Kawaji H."/>
            <person name="Kawagashira N."/>
            <person name="Kawashima T."/>
            <person name="Kojima M."/>
            <person name="Kondo S."/>
            <person name="Konno H."/>
            <person name="Nakano K."/>
            <person name="Ninomiya N."/>
            <person name="Nishio T."/>
            <person name="Okada M."/>
            <person name="Plessy C."/>
            <person name="Shibata K."/>
            <person name="Shiraki T."/>
            <person name="Suzuki S."/>
            <person name="Tagami M."/>
            <person name="Waki K."/>
            <person name="Watahiki A."/>
            <person name="Okamura-Oho Y."/>
            <person name="Suzuki H."/>
            <person name="Kawai J."/>
            <person name="Hayashizaki Y."/>
        </authorList>
    </citation>
    <scope>NUCLEOTIDE SEQUENCE [LARGE SCALE MRNA]</scope>
    <source>
        <strain>C57BL/6J</strain>
        <tissue>Hippocampus</tissue>
    </source>
</reference>
<reference key="2">
    <citation type="journal article" date="2006" name="Proc. Natl. Acad. Sci. U.S.A.">
        <title>GABAA receptor alpha 4 subunits mediate extrasynaptic inhibition in thalamus and dentate gyrus and the action of gaboxadol.</title>
        <authorList>
            <person name="Chandra D."/>
            <person name="Jia F."/>
            <person name="Liang J."/>
            <person name="Peng Z."/>
            <person name="Suryanarayanan A."/>
            <person name="Werner D.F."/>
            <person name="Spigelman I."/>
            <person name="Houser C.R."/>
            <person name="Olsen R.W."/>
            <person name="Harrison N.L."/>
            <person name="Homanics G.E."/>
        </authorList>
    </citation>
    <scope>FUNCTION</scope>
    <scope>TRANSPORTER ACTIVITY</scope>
    <scope>ACTIVITY REGULATION</scope>
    <scope>SUBCELLULAR LOCATION</scope>
    <scope>TISSUE SPECIFICITY</scope>
    <scope>DISRUPTION PHENOTYPE</scope>
</reference>